<feature type="chain" id="PRO_1000073533" description="GMP reductase">
    <location>
        <begin position="1"/>
        <end position="325"/>
    </location>
</feature>
<feature type="active site" description="Thioimidate intermediate" evidence="1">
    <location>
        <position position="174"/>
    </location>
</feature>
<feature type="binding site" evidence="1">
    <location>
        <begin position="203"/>
        <end position="226"/>
    </location>
    <ligand>
        <name>NADP(+)</name>
        <dbReference type="ChEBI" id="CHEBI:58349"/>
    </ligand>
</feature>
<protein>
    <recommendedName>
        <fullName evidence="1">GMP reductase</fullName>
        <ecNumber evidence="1">1.7.1.7</ecNumber>
    </recommendedName>
    <alternativeName>
        <fullName evidence="1">Guanosine 5'-monophosphate oxidoreductase</fullName>
        <shortName evidence="1">Guanosine monophosphate reductase</shortName>
    </alternativeName>
</protein>
<reference key="1">
    <citation type="journal article" date="2008" name="J. Bacteriol.">
        <title>Genome sequence of Staphylococcus aureus strain Newman and comparative analysis of staphylococcal genomes: polymorphism and evolution of two major pathogenicity islands.</title>
        <authorList>
            <person name="Baba T."/>
            <person name="Bae T."/>
            <person name="Schneewind O."/>
            <person name="Takeuchi F."/>
            <person name="Hiramatsu K."/>
        </authorList>
    </citation>
    <scope>NUCLEOTIDE SEQUENCE [LARGE SCALE GENOMIC DNA]</scope>
    <source>
        <strain>Newman</strain>
    </source>
</reference>
<keyword id="KW-0521">NADP</keyword>
<keyword id="KW-0560">Oxidoreductase</keyword>
<organism>
    <name type="scientific">Staphylococcus aureus (strain Newman)</name>
    <dbReference type="NCBI Taxonomy" id="426430"/>
    <lineage>
        <taxon>Bacteria</taxon>
        <taxon>Bacillati</taxon>
        <taxon>Bacillota</taxon>
        <taxon>Bacilli</taxon>
        <taxon>Bacillales</taxon>
        <taxon>Staphylococcaceae</taxon>
        <taxon>Staphylococcus</taxon>
    </lineage>
</organism>
<proteinExistence type="inferred from homology"/>
<sequence>MKIFDYEDIQLIPNKCIVESRSECDTTIQFGPKKFKLPVVPANMQTVMNEKLAKWFAENDYFYIMHRFDEEARIPFIKHMQNSGLFASISVGVKKAEFDFIEKLAQEKLIPEYITIDIAHGHSDSVINMIKHIKTHIPDSFVIAGNVGTPEGVRELENAGADATKVGIGPGRVCITKIKTGFGTGGWQLAALNICSKAARKPLIADGGIRTHGDIAKSIRFGASMVMIGSLFAAHEESPGETVELDGKQYKEYFGSASEFQKGEHKNVEGKKMFVEHKGSLMDTLKEMQQDLQSSISYAGGKDLKSLRTVDYVIVRNSIFNGDRD</sequence>
<accession>A6QGN9</accession>
<comment type="function">
    <text evidence="1">Catalyzes the irreversible NADPH-dependent deamination of GMP to IMP. It functions in the conversion of nucleobase, nucleoside and nucleotide derivatives of G to A nucleotides, and in maintaining the intracellular balance of A and G nucleotides.</text>
</comment>
<comment type="catalytic activity">
    <reaction evidence="1">
        <text>IMP + NH4(+) + NADP(+) = GMP + NADPH + 2 H(+)</text>
        <dbReference type="Rhea" id="RHEA:17185"/>
        <dbReference type="ChEBI" id="CHEBI:15378"/>
        <dbReference type="ChEBI" id="CHEBI:28938"/>
        <dbReference type="ChEBI" id="CHEBI:57783"/>
        <dbReference type="ChEBI" id="CHEBI:58053"/>
        <dbReference type="ChEBI" id="CHEBI:58115"/>
        <dbReference type="ChEBI" id="CHEBI:58349"/>
        <dbReference type="EC" id="1.7.1.7"/>
    </reaction>
</comment>
<comment type="similarity">
    <text evidence="1">Belongs to the IMPDH/GMPR family. GuaC type 2 subfamily.</text>
</comment>
<dbReference type="EC" id="1.7.1.7" evidence="1"/>
<dbReference type="EMBL" id="AP009351">
    <property type="protein sequence ID" value="BAF67521.1"/>
    <property type="molecule type" value="Genomic_DNA"/>
</dbReference>
<dbReference type="RefSeq" id="WP_000688126.1">
    <property type="nucleotide sequence ID" value="NZ_JBBIAE010000001.1"/>
</dbReference>
<dbReference type="SMR" id="A6QGN9"/>
<dbReference type="KEGG" id="sae:NWMN_1249"/>
<dbReference type="HOGENOM" id="CLU_022552_5_0_9"/>
<dbReference type="Proteomes" id="UP000006386">
    <property type="component" value="Chromosome"/>
</dbReference>
<dbReference type="GO" id="GO:0005829">
    <property type="term" value="C:cytosol"/>
    <property type="evidence" value="ECO:0007669"/>
    <property type="project" value="TreeGrafter"/>
</dbReference>
<dbReference type="GO" id="GO:1902560">
    <property type="term" value="C:GMP reductase complex"/>
    <property type="evidence" value="ECO:0007669"/>
    <property type="project" value="InterPro"/>
</dbReference>
<dbReference type="GO" id="GO:0003920">
    <property type="term" value="F:GMP reductase activity"/>
    <property type="evidence" value="ECO:0007669"/>
    <property type="project" value="UniProtKB-UniRule"/>
</dbReference>
<dbReference type="GO" id="GO:0006163">
    <property type="term" value="P:purine nucleotide metabolic process"/>
    <property type="evidence" value="ECO:0007669"/>
    <property type="project" value="UniProtKB-UniRule"/>
</dbReference>
<dbReference type="CDD" id="cd00381">
    <property type="entry name" value="IMPDH"/>
    <property type="match status" value="1"/>
</dbReference>
<dbReference type="FunFam" id="3.20.20.70:FF:000079">
    <property type="entry name" value="GMP reductase"/>
    <property type="match status" value="1"/>
</dbReference>
<dbReference type="Gene3D" id="3.20.20.70">
    <property type="entry name" value="Aldolase class I"/>
    <property type="match status" value="1"/>
</dbReference>
<dbReference type="HAMAP" id="MF_01511">
    <property type="entry name" value="GMP_reduct_type2"/>
    <property type="match status" value="1"/>
</dbReference>
<dbReference type="InterPro" id="IPR013785">
    <property type="entry name" value="Aldolase_TIM"/>
</dbReference>
<dbReference type="InterPro" id="IPR050139">
    <property type="entry name" value="GMP_reductase"/>
</dbReference>
<dbReference type="InterPro" id="IPR005994">
    <property type="entry name" value="GuaC_type_2"/>
</dbReference>
<dbReference type="InterPro" id="IPR015875">
    <property type="entry name" value="IMP_DH/GMP_Rdtase_CS"/>
</dbReference>
<dbReference type="InterPro" id="IPR001093">
    <property type="entry name" value="IMP_DH_GMPRt"/>
</dbReference>
<dbReference type="NCBIfam" id="TIGR01306">
    <property type="entry name" value="GMP_reduct_2"/>
    <property type="match status" value="1"/>
</dbReference>
<dbReference type="NCBIfam" id="NF003966">
    <property type="entry name" value="PRK05458.1"/>
    <property type="match status" value="1"/>
</dbReference>
<dbReference type="PANTHER" id="PTHR43170">
    <property type="entry name" value="GMP REDUCTASE"/>
    <property type="match status" value="1"/>
</dbReference>
<dbReference type="PANTHER" id="PTHR43170:SF5">
    <property type="entry name" value="GMP REDUCTASE"/>
    <property type="match status" value="1"/>
</dbReference>
<dbReference type="Pfam" id="PF00478">
    <property type="entry name" value="IMPDH"/>
    <property type="match status" value="1"/>
</dbReference>
<dbReference type="PIRSF" id="PIRSF036500">
    <property type="entry name" value="GMP_red_Firmic"/>
    <property type="match status" value="1"/>
</dbReference>
<dbReference type="SMART" id="SM01240">
    <property type="entry name" value="IMPDH"/>
    <property type="match status" value="1"/>
</dbReference>
<dbReference type="SUPFAM" id="SSF51412">
    <property type="entry name" value="Inosine monophosphate dehydrogenase (IMPDH)"/>
    <property type="match status" value="1"/>
</dbReference>
<dbReference type="PROSITE" id="PS00487">
    <property type="entry name" value="IMP_DH_GMP_RED"/>
    <property type="match status" value="1"/>
</dbReference>
<name>GUAC_STAAE</name>
<gene>
    <name evidence="1" type="primary">guaC</name>
    <name type="ordered locus">NWMN_1249</name>
</gene>
<evidence type="ECO:0000255" key="1">
    <source>
        <dbReference type="HAMAP-Rule" id="MF_01511"/>
    </source>
</evidence>